<sequence>MANISTSEMRSGSKVMVDGDPCAIIDNEHVKPGKGQAFNRIKLRNLKTGRVWERTFKSGDTLETADVMDTDMEYLYTDGEFWHFMAVDGSFEQHAADETAVGDTIKWLKEQEKYVVTLYNGAPLAVAAPNFIELEVKETDPGVKGDTANGGSKPAFLVTGAMVRVPLFINIGEVLRVDTRTGEYVSRATGK</sequence>
<protein>
    <recommendedName>
        <fullName evidence="1">Elongation factor P</fullName>
        <shortName evidence="1">EF-P</shortName>
    </recommendedName>
</protein>
<comment type="function">
    <text evidence="1">Involved in peptide bond synthesis. Alleviates ribosome stalling that occurs when 3 or more consecutive Pro residues or the sequence PPG is present in a protein, possibly by augmenting the peptidyl transferase activity of the ribosome. Modification of Lys-34 is required for alleviation.</text>
</comment>
<comment type="pathway">
    <text evidence="1">Protein biosynthesis; polypeptide chain elongation.</text>
</comment>
<comment type="subcellular location">
    <subcellularLocation>
        <location evidence="1">Cytoplasm</location>
    </subcellularLocation>
</comment>
<comment type="PTM">
    <text evidence="1">May be beta-lysylated on the epsilon-amino group of Lys-34 by the combined action of EpmA and EpmB, and then hydroxylated on the C5 position of the same residue by EpmC (if this protein is present). Lysylation is critical for the stimulatory effect of EF-P on peptide-bond formation. The lysylation moiety may extend toward the peptidyltransferase center and stabilize the terminal 3-CCA end of the tRNA. Hydroxylation of the C5 position on Lys-34 may allow additional potential stabilizing hydrogen-bond interactions with the P-tRNA.</text>
</comment>
<comment type="similarity">
    <text evidence="1">Belongs to the elongation factor P family.</text>
</comment>
<keyword id="KW-0963">Cytoplasm</keyword>
<keyword id="KW-0251">Elongation factor</keyword>
<keyword id="KW-0379">Hydroxylation</keyword>
<keyword id="KW-0648">Protein biosynthesis</keyword>
<evidence type="ECO:0000255" key="1">
    <source>
        <dbReference type="HAMAP-Rule" id="MF_00141"/>
    </source>
</evidence>
<organism>
    <name type="scientific">Marinomonas sp. (strain MWYL1)</name>
    <dbReference type="NCBI Taxonomy" id="400668"/>
    <lineage>
        <taxon>Bacteria</taxon>
        <taxon>Pseudomonadati</taxon>
        <taxon>Pseudomonadota</taxon>
        <taxon>Gammaproteobacteria</taxon>
        <taxon>Oceanospirillales</taxon>
        <taxon>Oceanospirillaceae</taxon>
        <taxon>Marinomonas</taxon>
    </lineage>
</organism>
<dbReference type="EMBL" id="CP000749">
    <property type="protein sequence ID" value="ABR69831.1"/>
    <property type="molecule type" value="Genomic_DNA"/>
</dbReference>
<dbReference type="SMR" id="A6VTQ2"/>
<dbReference type="STRING" id="400668.Mmwyl1_0899"/>
<dbReference type="KEGG" id="mmw:Mmwyl1_0899"/>
<dbReference type="eggNOG" id="COG0231">
    <property type="taxonomic scope" value="Bacteria"/>
</dbReference>
<dbReference type="HOGENOM" id="CLU_074944_0_0_6"/>
<dbReference type="OrthoDB" id="9801844at2"/>
<dbReference type="UniPathway" id="UPA00345"/>
<dbReference type="GO" id="GO:0005737">
    <property type="term" value="C:cytoplasm"/>
    <property type="evidence" value="ECO:0007669"/>
    <property type="project" value="UniProtKB-SubCell"/>
</dbReference>
<dbReference type="GO" id="GO:0003746">
    <property type="term" value="F:translation elongation factor activity"/>
    <property type="evidence" value="ECO:0007669"/>
    <property type="project" value="UniProtKB-UniRule"/>
</dbReference>
<dbReference type="GO" id="GO:0043043">
    <property type="term" value="P:peptide biosynthetic process"/>
    <property type="evidence" value="ECO:0007669"/>
    <property type="project" value="InterPro"/>
</dbReference>
<dbReference type="CDD" id="cd04470">
    <property type="entry name" value="S1_EF-P_repeat_1"/>
    <property type="match status" value="1"/>
</dbReference>
<dbReference type="CDD" id="cd05794">
    <property type="entry name" value="S1_EF-P_repeat_2"/>
    <property type="match status" value="1"/>
</dbReference>
<dbReference type="FunFam" id="2.30.30.30:FF:000003">
    <property type="entry name" value="Elongation factor P"/>
    <property type="match status" value="1"/>
</dbReference>
<dbReference type="FunFam" id="2.40.50.140:FF:000004">
    <property type="entry name" value="Elongation factor P"/>
    <property type="match status" value="1"/>
</dbReference>
<dbReference type="FunFam" id="2.40.50.140:FF:000009">
    <property type="entry name" value="Elongation factor P"/>
    <property type="match status" value="1"/>
</dbReference>
<dbReference type="Gene3D" id="2.30.30.30">
    <property type="match status" value="1"/>
</dbReference>
<dbReference type="Gene3D" id="2.40.50.140">
    <property type="entry name" value="Nucleic acid-binding proteins"/>
    <property type="match status" value="2"/>
</dbReference>
<dbReference type="HAMAP" id="MF_00141">
    <property type="entry name" value="EF_P"/>
    <property type="match status" value="1"/>
</dbReference>
<dbReference type="InterPro" id="IPR015365">
    <property type="entry name" value="Elong-fact-P_C"/>
</dbReference>
<dbReference type="InterPro" id="IPR012340">
    <property type="entry name" value="NA-bd_OB-fold"/>
</dbReference>
<dbReference type="InterPro" id="IPR014722">
    <property type="entry name" value="Rib_uL2_dom2"/>
</dbReference>
<dbReference type="InterPro" id="IPR020599">
    <property type="entry name" value="Transl_elong_fac_P/YeiP"/>
</dbReference>
<dbReference type="InterPro" id="IPR013185">
    <property type="entry name" value="Transl_elong_KOW-like"/>
</dbReference>
<dbReference type="InterPro" id="IPR001059">
    <property type="entry name" value="Transl_elong_P/YeiP_cen"/>
</dbReference>
<dbReference type="InterPro" id="IPR013852">
    <property type="entry name" value="Transl_elong_P/YeiP_CS"/>
</dbReference>
<dbReference type="InterPro" id="IPR011768">
    <property type="entry name" value="Transl_elongation_fac_P"/>
</dbReference>
<dbReference type="InterPro" id="IPR008991">
    <property type="entry name" value="Translation_prot_SH3-like_sf"/>
</dbReference>
<dbReference type="NCBIfam" id="TIGR00038">
    <property type="entry name" value="efp"/>
    <property type="match status" value="1"/>
</dbReference>
<dbReference type="NCBIfam" id="NF001810">
    <property type="entry name" value="PRK00529.1"/>
    <property type="match status" value="1"/>
</dbReference>
<dbReference type="PANTHER" id="PTHR30053">
    <property type="entry name" value="ELONGATION FACTOR P"/>
    <property type="match status" value="1"/>
</dbReference>
<dbReference type="PANTHER" id="PTHR30053:SF12">
    <property type="entry name" value="ELONGATION FACTOR P (EF-P) FAMILY PROTEIN"/>
    <property type="match status" value="1"/>
</dbReference>
<dbReference type="Pfam" id="PF01132">
    <property type="entry name" value="EFP"/>
    <property type="match status" value="1"/>
</dbReference>
<dbReference type="Pfam" id="PF08207">
    <property type="entry name" value="EFP_N"/>
    <property type="match status" value="1"/>
</dbReference>
<dbReference type="Pfam" id="PF09285">
    <property type="entry name" value="Elong-fact-P_C"/>
    <property type="match status" value="1"/>
</dbReference>
<dbReference type="PIRSF" id="PIRSF005901">
    <property type="entry name" value="EF-P"/>
    <property type="match status" value="1"/>
</dbReference>
<dbReference type="SMART" id="SM01185">
    <property type="entry name" value="EFP"/>
    <property type="match status" value="1"/>
</dbReference>
<dbReference type="SMART" id="SM00841">
    <property type="entry name" value="Elong-fact-P_C"/>
    <property type="match status" value="1"/>
</dbReference>
<dbReference type="SUPFAM" id="SSF50249">
    <property type="entry name" value="Nucleic acid-binding proteins"/>
    <property type="match status" value="2"/>
</dbReference>
<dbReference type="SUPFAM" id="SSF50104">
    <property type="entry name" value="Translation proteins SH3-like domain"/>
    <property type="match status" value="1"/>
</dbReference>
<dbReference type="PROSITE" id="PS01275">
    <property type="entry name" value="EFP"/>
    <property type="match status" value="1"/>
</dbReference>
<gene>
    <name evidence="1" type="primary">efp</name>
    <name type="ordered locus">Mmwyl1_0899</name>
</gene>
<accession>A6VTQ2</accession>
<name>EFP_MARMS</name>
<proteinExistence type="inferred from homology"/>
<reference key="1">
    <citation type="submission" date="2007-06" db="EMBL/GenBank/DDBJ databases">
        <title>Complete sequence of Marinomonas sp. MWYL1.</title>
        <authorList>
            <consortium name="US DOE Joint Genome Institute"/>
            <person name="Copeland A."/>
            <person name="Lucas S."/>
            <person name="Lapidus A."/>
            <person name="Barry K."/>
            <person name="Glavina del Rio T."/>
            <person name="Dalin E."/>
            <person name="Tice H."/>
            <person name="Pitluck S."/>
            <person name="Kiss H."/>
            <person name="Brettin T."/>
            <person name="Bruce D."/>
            <person name="Detter J.C."/>
            <person name="Han C."/>
            <person name="Schmutz J."/>
            <person name="Larimer F."/>
            <person name="Land M."/>
            <person name="Hauser L."/>
            <person name="Kyrpides N."/>
            <person name="Kim E."/>
            <person name="Johnston A.W.B."/>
            <person name="Todd J.D."/>
            <person name="Rogers R."/>
            <person name="Wexler M."/>
            <person name="Bond P.L."/>
            <person name="Li Y."/>
            <person name="Richardson P."/>
        </authorList>
    </citation>
    <scope>NUCLEOTIDE SEQUENCE [LARGE SCALE GENOMIC DNA]</scope>
    <source>
        <strain>MWYL1</strain>
    </source>
</reference>
<feature type="chain" id="PRO_1000076518" description="Elongation factor P">
    <location>
        <begin position="1"/>
        <end position="191"/>
    </location>
</feature>
<feature type="modified residue" description="N6-(3,6-diaminohexanoyl)-5-hydroxylysine" evidence="1">
    <location>
        <position position="34"/>
    </location>
</feature>